<keyword id="KW-0002">3D-structure</keyword>
<keyword id="KW-0025">Alternative splicing</keyword>
<keyword id="KW-0963">Cytoplasm</keyword>
<keyword id="KW-0488">Methylation</keyword>
<keyword id="KW-0507">mRNA processing</keyword>
<keyword id="KW-0508">mRNA splicing</keyword>
<keyword id="KW-0539">Nucleus</keyword>
<keyword id="KW-0597">Phosphoprotein</keyword>
<keyword id="KW-1267">Proteomics identification</keyword>
<keyword id="KW-1185">Reference proteome</keyword>
<keyword id="KW-0694">RNA-binding</keyword>
<evidence type="ECO:0000250" key="1"/>
<evidence type="ECO:0000250" key="2">
    <source>
        <dbReference type="UniProtKB" id="Q8BP71"/>
    </source>
</evidence>
<evidence type="ECO:0000255" key="3">
    <source>
        <dbReference type="PROSITE-ProRule" id="PRU00176"/>
    </source>
</evidence>
<evidence type="ECO:0000256" key="4">
    <source>
        <dbReference type="SAM" id="MobiDB-lite"/>
    </source>
</evidence>
<evidence type="ECO:0000269" key="5">
    <source>
    </source>
</evidence>
<evidence type="ECO:0000269" key="6">
    <source>
    </source>
</evidence>
<evidence type="ECO:0000303" key="7">
    <source>
    </source>
</evidence>
<evidence type="ECO:0000303" key="8">
    <source>
    </source>
</evidence>
<evidence type="ECO:0000303" key="9">
    <source>
    </source>
</evidence>
<evidence type="ECO:0000303" key="10">
    <source>
    </source>
</evidence>
<evidence type="ECO:0000303" key="11">
    <source ref="10"/>
</evidence>
<evidence type="ECO:0000303" key="12">
    <source ref="2"/>
</evidence>
<evidence type="ECO:0000303" key="13">
    <source ref="3"/>
</evidence>
<evidence type="ECO:0000303" key="14">
    <source ref="7"/>
</evidence>
<evidence type="ECO:0000305" key="15"/>
<evidence type="ECO:0007744" key="16">
    <source>
    </source>
</evidence>
<evidence type="ECO:0007744" key="17">
    <source>
    </source>
</evidence>
<evidence type="ECO:0007829" key="18">
    <source>
        <dbReference type="PDB" id="2CQ3"/>
    </source>
</evidence>
<gene>
    <name type="primary">RBFOX2</name>
    <name type="synonym">FOX2</name>
    <name type="synonym">HRNBP2</name>
    <name type="synonym">RBM9</name>
    <name type="synonym">RTA</name>
</gene>
<sequence length="390" mass="41374">MQNEPLTPGYHGFPARDSQGNQEPTTTPDAMVQPFTTIPFPPPPQNGIPTEYGVPHTQDYAGQTGEHNLTLYGSTQAHGEQSSNSPSTQNGSLTTEGGAQTDGQQSQTQSSENSESKSTPKRLHVSNIPFRFRDPDLRQMFGQFGKILDVEIIFNERGSKGFGFVTFENSADADRAREKLHGTVVEGRKIEVNNATARVMTNKKMVTPYANGWKLSPVVGAVYGPELYAASSFQADVSLGNDAAVPLSGRGGINTYIPLISLPLVPGFPYPTAATTAAAFRGAHLRGRGRTVYGAVRAVPPTAIPAYPGVVYQDGFYGADLYGGYAAYRYAQPATATAATAAAAAAAAYSDGYGRVYTADPYHALAPAASYGVGAVASLYRGGYSRFAPY</sequence>
<name>RFOX2_HUMAN</name>
<protein>
    <recommendedName>
        <fullName>RNA binding protein fox-1 homolog 2</fullName>
    </recommendedName>
    <alternativeName>
        <fullName>Fox-1 homolog B</fullName>
    </alternativeName>
    <alternativeName>
        <fullName>Hexaribonucleotide-binding protein 2</fullName>
    </alternativeName>
    <alternativeName>
        <fullName>RNA-binding motif protein 9</fullName>
    </alternativeName>
    <alternativeName>
        <fullName>RNA-binding protein 9</fullName>
    </alternativeName>
    <alternativeName>
        <fullName>Repressor of tamoxifen transcriptional activity</fullName>
    </alternativeName>
</protein>
<comment type="function">
    <text evidence="1 5 6">RNA-binding protein that regulates alternative splicing events by binding to 5'-UGCAUGU-3' elements. Prevents binding of U2AF2 to the 3'-splice site. Regulates alternative splicing of tissue-specific exons and of differentially spliced exons during erythropoiesis (By similarity). RNA-binding protein that seems to act as a coregulatory factor of ER-alpha. Together with RNA binding proteins RBPMS and MBNL1/2, activates vascular smooth muscle cells alternative splicing events (PubMed:37548402).</text>
</comment>
<comment type="subunit">
    <text evidence="6">Interacts with ER-alpha N-terminal activation domain. Interacts with RBPMS; the interaction allows cooperative assembly of stable cell-specific alternative splicing regulatory complexes (PubMed:37548402).</text>
</comment>
<comment type="interaction">
    <interactant intactId="EBI-746056">
        <id>O43251</id>
    </interactant>
    <interactant intactId="EBI-930964">
        <id>P54253</id>
        <label>ATXN1</label>
    </interactant>
    <organismsDiffer>false</organismsDiffer>
    <experiments>10</experiments>
</comment>
<comment type="interaction">
    <interactant intactId="EBI-746056">
        <id>O43251</id>
    </interactant>
    <interactant intactId="EBI-998198">
        <id>Q8N9W6</id>
        <label>BOLL</label>
    </interactant>
    <organismsDiffer>false</organismsDiffer>
    <experiments>4</experiments>
</comment>
<comment type="interaction">
    <interactant intactId="EBI-746056">
        <id>O43251</id>
    </interactant>
    <interactant intactId="EBI-946029">
        <id>Q6P1W5</id>
        <label>C1orf94</label>
    </interactant>
    <organismsDiffer>false</organismsDiffer>
    <experiments>3</experiments>
</comment>
<comment type="interaction">
    <interactant intactId="EBI-746056">
        <id>O43251</id>
    </interactant>
    <interactant intactId="EBI-1058722">
        <id>Q13554</id>
        <label>CAMK2B</label>
    </interactant>
    <organismsDiffer>false</organismsDiffer>
    <experiments>3</experiments>
</comment>
<comment type="interaction">
    <interactant intactId="EBI-746056">
        <id>O43251</id>
    </interactant>
    <interactant intactId="EBI-7875264">
        <id>O75553</id>
        <label>DAB1</label>
    </interactant>
    <organismsDiffer>false</organismsDiffer>
    <experiments>3</experiments>
</comment>
<comment type="interaction">
    <interactant intactId="EBI-746056">
        <id>O43251</id>
    </interactant>
    <interactant intactId="EBI-724310">
        <id>Q15038</id>
        <label>DAZAP2</label>
    </interactant>
    <organismsDiffer>false</organismsDiffer>
    <experiments>5</experiments>
</comment>
<comment type="interaction">
    <interactant intactId="EBI-746056">
        <id>O43251</id>
    </interactant>
    <interactant intactId="EBI-78473">
        <id>P03372</id>
        <label>ESR1</label>
    </interactant>
    <organismsDiffer>false</organismsDiffer>
    <experiments>4</experiments>
</comment>
<comment type="interaction">
    <interactant intactId="EBI-746056">
        <id>O43251</id>
    </interactant>
    <interactant intactId="EBI-352986">
        <id>P52597</id>
        <label>HNRNPF</label>
    </interactant>
    <organismsDiffer>false</organismsDiffer>
    <experiments>4</experiments>
</comment>
<comment type="interaction">
    <interactant intactId="EBI-746056">
        <id>O43251</id>
    </interactant>
    <interactant intactId="EBI-716006">
        <id>Q9Y5V3</id>
        <label>MAGED1</label>
    </interactant>
    <organismsDiffer>false</organismsDiffer>
    <experiments>3</experiments>
</comment>
<comment type="interaction">
    <interactant intactId="EBI-746056">
        <id>O43251</id>
    </interactant>
    <interactant intactId="EBI-741424">
        <id>Q8NDC0</id>
        <label>MAPK1IP1L</label>
    </interactant>
    <organismsDiffer>false</organismsDiffer>
    <experiments>3</experiments>
</comment>
<comment type="interaction">
    <interactant intactId="EBI-746056">
        <id>O43251</id>
    </interactant>
    <interactant intactId="EBI-2515597">
        <id>Q96HR8</id>
        <label>NAF1</label>
    </interactant>
    <organismsDiffer>false</organismsDiffer>
    <experiments>3</experiments>
</comment>
<comment type="interaction">
    <interactant intactId="EBI-746056">
        <id>O43251</id>
    </interactant>
    <interactant intactId="EBI-348380">
        <id>P25788</id>
        <label>PSMA3</label>
    </interactant>
    <organismsDiffer>false</organismsDiffer>
    <experiments>3</experiments>
</comment>
<comment type="interaction">
    <interactant intactId="EBI-746056">
        <id>O43251</id>
    </interactant>
    <interactant intactId="EBI-945792">
        <id>Q96PU8</id>
        <label>QKI</label>
    </interactant>
    <organismsDiffer>false</organismsDiffer>
    <experiments>4</experiments>
</comment>
<comment type="interaction">
    <interactant intactId="EBI-746056">
        <id>O43251</id>
    </interactant>
    <interactant intactId="EBI-945906">
        <id>Q9NWB1</id>
        <label>RBFOX1</label>
    </interactant>
    <organismsDiffer>false</organismsDiffer>
    <experiments>2</experiments>
</comment>
<comment type="interaction">
    <interactant intactId="EBI-746056">
        <id>O43251</id>
    </interactant>
    <interactant intactId="EBI-740322">
        <id>Q93062</id>
        <label>RBPMS</label>
    </interactant>
    <organismsDiffer>false</organismsDiffer>
    <experiments>3</experiments>
</comment>
<comment type="interaction">
    <interactant intactId="EBI-746056">
        <id>O43251</id>
    </interactant>
    <interactant intactId="EBI-372094">
        <id>Q9BQY4</id>
        <label>RHOXF2</label>
    </interactant>
    <organismsDiffer>false</organismsDiffer>
    <experiments>3</experiments>
</comment>
<comment type="interaction">
    <interactant intactId="EBI-746056">
        <id>O43251</id>
    </interactant>
    <interactant intactId="EBI-373337">
        <id>O76064</id>
        <label>RNF8</label>
    </interactant>
    <organismsDiffer>false</organismsDiffer>
    <experiments>3</experiments>
</comment>
<comment type="interaction">
    <interactant intactId="EBI-746056">
        <id>O43251</id>
    </interactant>
    <interactant intactId="EBI-2107455">
        <id>Q08AM6</id>
        <label>VAC14</label>
    </interactant>
    <organismsDiffer>false</organismsDiffer>
    <experiments>4</experiments>
</comment>
<comment type="interaction">
    <interactant intactId="EBI-11531589">
        <id>O43251-3</id>
    </interactant>
    <interactant intactId="EBI-466029">
        <id>P42858</id>
        <label>HTT</label>
    </interactant>
    <organismsDiffer>false</organismsDiffer>
    <experiments>3</experiments>
</comment>
<comment type="interaction">
    <interactant intactId="EBI-10987522">
        <id>O43251-6</id>
    </interactant>
    <interactant intactId="EBI-20625235">
        <id>A0A142I5B9</id>
    </interactant>
    <organismsDiffer>true</organismsDiffer>
    <experiments>3</experiments>
</comment>
<comment type="interaction">
    <interactant intactId="EBI-11963050">
        <id>O43251-10</id>
    </interactant>
    <interactant intactId="EBI-930964">
        <id>P54253</id>
        <label>ATXN1</label>
    </interactant>
    <organismsDiffer>false</organismsDiffer>
    <experiments>3</experiments>
</comment>
<comment type="interaction">
    <interactant intactId="EBI-11963050">
        <id>O43251-10</id>
    </interactant>
    <interactant intactId="EBI-8624731">
        <id>P0C7T5</id>
        <label>ATXN1L</label>
    </interactant>
    <organismsDiffer>false</organismsDiffer>
    <experiments>3</experiments>
</comment>
<comment type="interaction">
    <interactant intactId="EBI-11963050">
        <id>O43251-10</id>
    </interactant>
    <interactant intactId="EBI-11983447">
        <id>Q8N9W6-4</id>
        <label>BOLL</label>
    </interactant>
    <organismsDiffer>false</organismsDiffer>
    <experiments>3</experiments>
</comment>
<comment type="interaction">
    <interactant intactId="EBI-11963050">
        <id>O43251-10</id>
    </interactant>
    <interactant intactId="EBI-1383687">
        <id>Q9UQM7</id>
        <label>CAMK2A</label>
    </interactant>
    <organismsDiffer>false</organismsDiffer>
    <experiments>3</experiments>
</comment>
<comment type="interaction">
    <interactant intactId="EBI-11963050">
        <id>O43251-10</id>
    </interactant>
    <interactant intactId="EBI-2555370">
        <id>Q8IWX8</id>
        <label>CHERP</label>
    </interactant>
    <organismsDiffer>false</organismsDiffer>
    <experiments>3</experiments>
</comment>
<comment type="interaction">
    <interactant intactId="EBI-11963050">
        <id>O43251-10</id>
    </interactant>
    <interactant intactId="EBI-724310">
        <id>Q15038</id>
        <label>DAZAP2</label>
    </interactant>
    <organismsDiffer>false</organismsDiffer>
    <experiments>4</experiments>
</comment>
<comment type="interaction">
    <interactant intactId="EBI-11963050">
        <id>O43251-10</id>
    </interactant>
    <interactant intactId="EBI-12193763">
        <id>A1KXE4-2</id>
        <label>FAM168B</label>
    </interactant>
    <organismsDiffer>false</organismsDiffer>
    <experiments>3</experiments>
</comment>
<comment type="interaction">
    <interactant intactId="EBI-11963050">
        <id>O43251-10</id>
    </interactant>
    <interactant intactId="EBI-352986">
        <id>P52597</id>
        <label>HNRNPF</label>
    </interactant>
    <organismsDiffer>false</organismsDiffer>
    <experiments>3</experiments>
</comment>
<comment type="interaction">
    <interactant intactId="EBI-11963050">
        <id>O43251-10</id>
    </interactant>
    <interactant intactId="EBI-351590">
        <id>P31943</id>
        <label>HNRNPH1</label>
    </interactant>
    <organismsDiffer>false</organismsDiffer>
    <experiments>3</experiments>
</comment>
<comment type="interaction">
    <interactant intactId="EBI-11963050">
        <id>O43251-10</id>
    </interactant>
    <interactant intactId="EBI-11962084">
        <id>Q3LI66</id>
        <label>KRTAP6-2</label>
    </interactant>
    <organismsDiffer>false</organismsDiffer>
    <experiments>3</experiments>
</comment>
<comment type="interaction">
    <interactant intactId="EBI-11963050">
        <id>O43251-10</id>
    </interactant>
    <interactant intactId="EBI-716006">
        <id>Q9Y5V3</id>
        <label>MAGED1</label>
    </interactant>
    <organismsDiffer>false</organismsDiffer>
    <experiments>3</experiments>
</comment>
<comment type="interaction">
    <interactant intactId="EBI-11963050">
        <id>O43251-10</id>
    </interactant>
    <interactant intactId="EBI-12813389">
        <id>Q8TDS5</id>
        <label>OXER1</label>
    </interactant>
    <organismsDiffer>false</organismsDiffer>
    <experiments>3</experiments>
</comment>
<comment type="interaction">
    <interactant intactId="EBI-11963050">
        <id>O43251-10</id>
    </interactant>
    <interactant intactId="EBI-946095">
        <id>Q15365</id>
        <label>PCBP1</label>
    </interactant>
    <organismsDiffer>false</organismsDiffer>
    <experiments>3</experiments>
</comment>
<comment type="interaction">
    <interactant intactId="EBI-11963050">
        <id>O43251-10</id>
    </interactant>
    <interactant intactId="EBI-740343">
        <id>Q93062-3</id>
        <label>RBPMS</label>
    </interactant>
    <organismsDiffer>false</organismsDiffer>
    <experiments>3</experiments>
</comment>
<comment type="interaction">
    <interactant intactId="EBI-11963050">
        <id>O43251-10</id>
    </interactant>
    <interactant intactId="EBI-11987469">
        <id>Q6ZRY4</id>
        <label>RBPMS2</label>
    </interactant>
    <organismsDiffer>false</organismsDiffer>
    <experiments>5</experiments>
</comment>
<comment type="interaction">
    <interactant intactId="EBI-11963050">
        <id>O43251-10</id>
    </interactant>
    <interactant intactId="EBI-372094">
        <id>Q9BQY4</id>
        <label>RHOXF2</label>
    </interactant>
    <organismsDiffer>false</organismsDiffer>
    <experiments>3</experiments>
</comment>
<comment type="interaction">
    <interactant intactId="EBI-11963050">
        <id>O43251-10</id>
    </interactant>
    <interactant intactId="EBI-373337">
        <id>O76064</id>
        <label>RNF8</label>
    </interactant>
    <organismsDiffer>false</organismsDiffer>
    <experiments>3</experiments>
</comment>
<comment type="interaction">
    <interactant intactId="EBI-11963050">
        <id>O43251-10</id>
    </interactant>
    <interactant intactId="EBI-743976">
        <id>Q96LM6</id>
        <label>SPMIP9</label>
    </interactant>
    <organismsDiffer>false</organismsDiffer>
    <experiments>3</experiments>
</comment>
<comment type="interaction">
    <interactant intactId="EBI-11963050">
        <id>O43251-10</id>
    </interactant>
    <interactant intactId="EBI-947187">
        <id>Q9UHD9</id>
        <label>UBQLN2</label>
    </interactant>
    <organismsDiffer>false</organismsDiffer>
    <experiments>3</experiments>
</comment>
<comment type="subcellular location">
    <subcellularLocation>
        <location>Nucleus</location>
    </subcellularLocation>
    <subcellularLocation>
        <location evidence="1">Cytoplasm</location>
    </subcellularLocation>
</comment>
<comment type="alternative products">
    <event type="alternative splicing"/>
    <isoform>
        <id>O43251-1</id>
        <name>1</name>
        <sequence type="displayed"/>
    </isoform>
    <isoform>
        <id>O43251-2</id>
        <name>2</name>
        <sequence type="described" ref="VSP_007180 VSP_030890"/>
    </isoform>
    <isoform>
        <id>O43251-3</id>
        <name>3</name>
        <sequence type="described" ref="VSP_007180 VSP_007181 VSP_007182"/>
    </isoform>
    <isoform>
        <id>O43251-4</id>
        <name>4</name>
        <sequence type="described" ref="VSP_007180 VSP_007183"/>
    </isoform>
    <isoform>
        <id>O43251-5</id>
        <name>5</name>
        <sequence type="described" ref="VSP_007180 VSP_007182"/>
    </isoform>
    <isoform>
        <id>O43251-6</id>
        <name>6</name>
        <sequence type="described" ref="VSP_030889"/>
    </isoform>
    <isoform>
        <id>O43251-7</id>
        <name>7</name>
        <sequence type="described" ref="VSP_007182 VSP_030891"/>
    </isoform>
    <isoform>
        <id>O43251-8</id>
        <name>8</name>
        <sequence type="described" ref="VSP_030889 VSP_030890"/>
    </isoform>
    <isoform>
        <id>O43251-9</id>
        <name>9</name>
        <sequence type="described" ref="VSP_007180 VSP_030890 VSP_007182 VSP_007183"/>
    </isoform>
    <isoform>
        <id>O43251-10</id>
        <name>10</name>
        <sequence type="described" ref="VSP_007180"/>
    </isoform>
</comment>
<reference key="1">
    <citation type="journal article" date="2002" name="Mol. Endocrinol.">
        <title>A negative coregulator for the human ER.</title>
        <authorList>
            <person name="Norris J.D."/>
            <person name="Fan D."/>
            <person name="Sherk A."/>
            <person name="McDonnell D.P."/>
        </authorList>
    </citation>
    <scope>NUCLEOTIDE SEQUENCE [MRNA] (ISOFORM 1)</scope>
    <scope>FUNCTION</scope>
    <scope>TISSUE SPECIFICITY</scope>
</reference>
<reference key="2">
    <citation type="submission" date="2000-01" db="EMBL/GenBank/DDBJ databases">
        <authorList>
            <person name="Chen W."/>
            <person name="Winkelmann J.C."/>
        </authorList>
    </citation>
    <scope>NUCLEOTIDE SEQUENCE [MRNA] (ISOFORM 10)</scope>
</reference>
<reference key="3">
    <citation type="submission" date="2005-03" db="EMBL/GenBank/DDBJ databases">
        <title>A novel isoform of RNA binding motif protein 9.</title>
        <authorList>
            <person name="Yang G."/>
            <person name="Huang S.C."/>
            <person name="Benz E.J. Jr."/>
        </authorList>
    </citation>
    <scope>NUCLEOTIDE SEQUENCE [MRNA] (ISOFORM 4)</scope>
</reference>
<reference key="4">
    <citation type="journal article" date="2003" name="Genome Res.">
        <title>Reevaluating human gene annotation: a second-generation analysis of chromosome 22.</title>
        <authorList>
            <person name="Collins J.E."/>
            <person name="Goward M.E."/>
            <person name="Cole C.G."/>
            <person name="Smink L.J."/>
            <person name="Huckle E.J."/>
            <person name="Knowles S."/>
            <person name="Bye J.M."/>
            <person name="Beare D.M."/>
            <person name="Dunham I."/>
        </authorList>
    </citation>
    <scope>NUCLEOTIDE SEQUENCE [LARGE SCALE MRNA] (ISOFORM 9)</scope>
    <source>
        <tissue>Placenta</tissue>
    </source>
</reference>
<reference key="5">
    <citation type="journal article" date="2004" name="Genome Biol.">
        <title>A genome annotation-driven approach to cloning the human ORFeome.</title>
        <authorList>
            <person name="Collins J.E."/>
            <person name="Wright C.L."/>
            <person name="Edwards C.A."/>
            <person name="Davis M.P."/>
            <person name="Grinham J.A."/>
            <person name="Cole C.G."/>
            <person name="Goward M.E."/>
            <person name="Aguado B."/>
            <person name="Mallya M."/>
            <person name="Mokrab Y."/>
            <person name="Huckle E.J."/>
            <person name="Beare D.M."/>
            <person name="Dunham I."/>
        </authorList>
    </citation>
    <scope>NUCLEOTIDE SEQUENCE [LARGE SCALE MRNA] (ISOFORM 5)</scope>
</reference>
<reference key="6">
    <citation type="journal article" date="2004" name="Nat. Genet.">
        <title>Complete sequencing and characterization of 21,243 full-length human cDNAs.</title>
        <authorList>
            <person name="Ota T."/>
            <person name="Suzuki Y."/>
            <person name="Nishikawa T."/>
            <person name="Otsuki T."/>
            <person name="Sugiyama T."/>
            <person name="Irie R."/>
            <person name="Wakamatsu A."/>
            <person name="Hayashi K."/>
            <person name="Sato H."/>
            <person name="Nagai K."/>
            <person name="Kimura K."/>
            <person name="Makita H."/>
            <person name="Sekine M."/>
            <person name="Obayashi M."/>
            <person name="Nishi T."/>
            <person name="Shibahara T."/>
            <person name="Tanaka T."/>
            <person name="Ishii S."/>
            <person name="Yamamoto J."/>
            <person name="Saito K."/>
            <person name="Kawai Y."/>
            <person name="Isono Y."/>
            <person name="Nakamura Y."/>
            <person name="Nagahari K."/>
            <person name="Murakami K."/>
            <person name="Yasuda T."/>
            <person name="Iwayanagi T."/>
            <person name="Wagatsuma M."/>
            <person name="Shiratori A."/>
            <person name="Sudo H."/>
            <person name="Hosoiri T."/>
            <person name="Kaku Y."/>
            <person name="Kodaira H."/>
            <person name="Kondo H."/>
            <person name="Sugawara M."/>
            <person name="Takahashi M."/>
            <person name="Kanda K."/>
            <person name="Yokoi T."/>
            <person name="Furuya T."/>
            <person name="Kikkawa E."/>
            <person name="Omura Y."/>
            <person name="Abe K."/>
            <person name="Kamihara K."/>
            <person name="Katsuta N."/>
            <person name="Sato K."/>
            <person name="Tanikawa M."/>
            <person name="Yamazaki M."/>
            <person name="Ninomiya K."/>
            <person name="Ishibashi T."/>
            <person name="Yamashita H."/>
            <person name="Murakawa K."/>
            <person name="Fujimori K."/>
            <person name="Tanai H."/>
            <person name="Kimata M."/>
            <person name="Watanabe M."/>
            <person name="Hiraoka S."/>
            <person name="Chiba Y."/>
            <person name="Ishida S."/>
            <person name="Ono Y."/>
            <person name="Takiguchi S."/>
            <person name="Watanabe S."/>
            <person name="Yosida M."/>
            <person name="Hotuta T."/>
            <person name="Kusano J."/>
            <person name="Kanehori K."/>
            <person name="Takahashi-Fujii A."/>
            <person name="Hara H."/>
            <person name="Tanase T.-O."/>
            <person name="Nomura Y."/>
            <person name="Togiya S."/>
            <person name="Komai F."/>
            <person name="Hara R."/>
            <person name="Takeuchi K."/>
            <person name="Arita M."/>
            <person name="Imose N."/>
            <person name="Musashino K."/>
            <person name="Yuuki H."/>
            <person name="Oshima A."/>
            <person name="Sasaki N."/>
            <person name="Aotsuka S."/>
            <person name="Yoshikawa Y."/>
            <person name="Matsunawa H."/>
            <person name="Ichihara T."/>
            <person name="Shiohata N."/>
            <person name="Sano S."/>
            <person name="Moriya S."/>
            <person name="Momiyama H."/>
            <person name="Satoh N."/>
            <person name="Takami S."/>
            <person name="Terashima Y."/>
            <person name="Suzuki O."/>
            <person name="Nakagawa S."/>
            <person name="Senoh A."/>
            <person name="Mizoguchi H."/>
            <person name="Goto Y."/>
            <person name="Shimizu F."/>
            <person name="Wakebe H."/>
            <person name="Hishigaki H."/>
            <person name="Watanabe T."/>
            <person name="Sugiyama A."/>
            <person name="Takemoto M."/>
            <person name="Kawakami B."/>
            <person name="Yamazaki M."/>
            <person name="Watanabe K."/>
            <person name="Kumagai A."/>
            <person name="Itakura S."/>
            <person name="Fukuzumi Y."/>
            <person name="Fujimori Y."/>
            <person name="Komiyama M."/>
            <person name="Tashiro H."/>
            <person name="Tanigami A."/>
            <person name="Fujiwara T."/>
            <person name="Ono T."/>
            <person name="Yamada K."/>
            <person name="Fujii Y."/>
            <person name="Ozaki K."/>
            <person name="Hirao M."/>
            <person name="Ohmori Y."/>
            <person name="Kawabata A."/>
            <person name="Hikiji T."/>
            <person name="Kobatake N."/>
            <person name="Inagaki H."/>
            <person name="Ikema Y."/>
            <person name="Okamoto S."/>
            <person name="Okitani R."/>
            <person name="Kawakami T."/>
            <person name="Noguchi S."/>
            <person name="Itoh T."/>
            <person name="Shigeta K."/>
            <person name="Senba T."/>
            <person name="Matsumura K."/>
            <person name="Nakajima Y."/>
            <person name="Mizuno T."/>
            <person name="Morinaga M."/>
            <person name="Sasaki M."/>
            <person name="Togashi T."/>
            <person name="Oyama M."/>
            <person name="Hata H."/>
            <person name="Watanabe M."/>
            <person name="Komatsu T."/>
            <person name="Mizushima-Sugano J."/>
            <person name="Satoh T."/>
            <person name="Shirai Y."/>
            <person name="Takahashi Y."/>
            <person name="Nakagawa K."/>
            <person name="Okumura K."/>
            <person name="Nagase T."/>
            <person name="Nomura N."/>
            <person name="Kikuchi H."/>
            <person name="Masuho Y."/>
            <person name="Yamashita R."/>
            <person name="Nakai K."/>
            <person name="Yada T."/>
            <person name="Nakamura Y."/>
            <person name="Ohara O."/>
            <person name="Isogai T."/>
            <person name="Sugano S."/>
        </authorList>
    </citation>
    <scope>NUCLEOTIDE SEQUENCE [LARGE SCALE MRNA] (ISOFORMS 2 AND 6)</scope>
    <source>
        <tissue>Brain</tissue>
    </source>
</reference>
<reference key="7">
    <citation type="submission" date="2006-06" db="EMBL/GenBank/DDBJ databases">
        <authorList>
            <person name="Zhou G."/>
            <person name="Nong W."/>
            <person name="Li H."/>
            <person name="Ke R."/>
            <person name="Shen C."/>
            <person name="Liang M."/>
            <person name="Tang Z."/>
            <person name="Huang B."/>
            <person name="Lin L."/>
            <person name="Yang S."/>
        </authorList>
    </citation>
    <scope>NUCLEOTIDE SEQUENCE [LARGE SCALE MRNA] (ISOFORM 8)</scope>
</reference>
<reference key="8">
    <citation type="journal article" date="1999" name="Nature">
        <title>The DNA sequence of human chromosome 22.</title>
        <authorList>
            <person name="Dunham I."/>
            <person name="Hunt A.R."/>
            <person name="Collins J.E."/>
            <person name="Bruskiewich R."/>
            <person name="Beare D.M."/>
            <person name="Clamp M."/>
            <person name="Smink L.J."/>
            <person name="Ainscough R."/>
            <person name="Almeida J.P."/>
            <person name="Babbage A.K."/>
            <person name="Bagguley C."/>
            <person name="Bailey J."/>
            <person name="Barlow K.F."/>
            <person name="Bates K.N."/>
            <person name="Beasley O.P."/>
            <person name="Bird C.P."/>
            <person name="Blakey S.E."/>
            <person name="Bridgeman A.M."/>
            <person name="Buck D."/>
            <person name="Burgess J."/>
            <person name="Burrill W.D."/>
            <person name="Burton J."/>
            <person name="Carder C."/>
            <person name="Carter N.P."/>
            <person name="Chen Y."/>
            <person name="Clark G."/>
            <person name="Clegg S.M."/>
            <person name="Cobley V.E."/>
            <person name="Cole C.G."/>
            <person name="Collier R.E."/>
            <person name="Connor R."/>
            <person name="Conroy D."/>
            <person name="Corby N.R."/>
            <person name="Coville G.J."/>
            <person name="Cox A.V."/>
            <person name="Davis J."/>
            <person name="Dawson E."/>
            <person name="Dhami P.D."/>
            <person name="Dockree C."/>
            <person name="Dodsworth S.J."/>
            <person name="Durbin R.M."/>
            <person name="Ellington A.G."/>
            <person name="Evans K.L."/>
            <person name="Fey J.M."/>
            <person name="Fleming K."/>
            <person name="French L."/>
            <person name="Garner A.A."/>
            <person name="Gilbert J.G.R."/>
            <person name="Goward M.E."/>
            <person name="Grafham D.V."/>
            <person name="Griffiths M.N.D."/>
            <person name="Hall C."/>
            <person name="Hall R.E."/>
            <person name="Hall-Tamlyn G."/>
            <person name="Heathcott R.W."/>
            <person name="Ho S."/>
            <person name="Holmes S."/>
            <person name="Hunt S.E."/>
            <person name="Jones M.C."/>
            <person name="Kershaw J."/>
            <person name="Kimberley A.M."/>
            <person name="King A."/>
            <person name="Laird G.K."/>
            <person name="Langford C.F."/>
            <person name="Leversha M.A."/>
            <person name="Lloyd C."/>
            <person name="Lloyd D.M."/>
            <person name="Martyn I.D."/>
            <person name="Mashreghi-Mohammadi M."/>
            <person name="Matthews L.H."/>
            <person name="Mccann O.T."/>
            <person name="Mcclay J."/>
            <person name="Mclaren S."/>
            <person name="McMurray A.A."/>
            <person name="Milne S.A."/>
            <person name="Mortimore B.J."/>
            <person name="Odell C.N."/>
            <person name="Pavitt R."/>
            <person name="Pearce A.V."/>
            <person name="Pearson D."/>
            <person name="Phillimore B.J.C.T."/>
            <person name="Phillips S.H."/>
            <person name="Plumb R.W."/>
            <person name="Ramsay H."/>
            <person name="Ramsey Y."/>
            <person name="Rogers L."/>
            <person name="Ross M.T."/>
            <person name="Scott C.E."/>
            <person name="Sehra H.K."/>
            <person name="Skuce C.D."/>
            <person name="Smalley S."/>
            <person name="Smith M.L."/>
            <person name="Soderlund C."/>
            <person name="Spragon L."/>
            <person name="Steward C.A."/>
            <person name="Sulston J.E."/>
            <person name="Swann R.M."/>
            <person name="Vaudin M."/>
            <person name="Wall M."/>
            <person name="Wallis J.M."/>
            <person name="Whiteley M.N."/>
            <person name="Willey D.L."/>
            <person name="Williams L."/>
            <person name="Williams S.A."/>
            <person name="Williamson H."/>
            <person name="Wilmer T.E."/>
            <person name="Wilming L."/>
            <person name="Wright C.L."/>
            <person name="Hubbard T."/>
            <person name="Bentley D.R."/>
            <person name="Beck S."/>
            <person name="Rogers J."/>
            <person name="Shimizu N."/>
            <person name="Minoshima S."/>
            <person name="Kawasaki K."/>
            <person name="Sasaki T."/>
            <person name="Asakawa S."/>
            <person name="Kudoh J."/>
            <person name="Shintani A."/>
            <person name="Shibuya K."/>
            <person name="Yoshizaki Y."/>
            <person name="Aoki N."/>
            <person name="Mitsuyama S."/>
            <person name="Roe B.A."/>
            <person name="Chen F."/>
            <person name="Chu L."/>
            <person name="Crabtree J."/>
            <person name="Deschamps S."/>
            <person name="Do A."/>
            <person name="Do T."/>
            <person name="Dorman A."/>
            <person name="Fang F."/>
            <person name="Fu Y."/>
            <person name="Hu P."/>
            <person name="Hua A."/>
            <person name="Kenton S."/>
            <person name="Lai H."/>
            <person name="Lao H.I."/>
            <person name="Lewis J."/>
            <person name="Lewis S."/>
            <person name="Lin S.-P."/>
            <person name="Loh P."/>
            <person name="Malaj E."/>
            <person name="Nguyen T."/>
            <person name="Pan H."/>
            <person name="Phan S."/>
            <person name="Qi S."/>
            <person name="Qian Y."/>
            <person name="Ray L."/>
            <person name="Ren Q."/>
            <person name="Shaull S."/>
            <person name="Sloan D."/>
            <person name="Song L."/>
            <person name="Wang Q."/>
            <person name="Wang Y."/>
            <person name="Wang Z."/>
            <person name="White J."/>
            <person name="Willingham D."/>
            <person name="Wu H."/>
            <person name="Yao Z."/>
            <person name="Zhan M."/>
            <person name="Zhang G."/>
            <person name="Chissoe S."/>
            <person name="Murray J."/>
            <person name="Miller N."/>
            <person name="Minx P."/>
            <person name="Fulton R."/>
            <person name="Johnson D."/>
            <person name="Bemis G."/>
            <person name="Bentley D."/>
            <person name="Bradshaw H."/>
            <person name="Bourne S."/>
            <person name="Cordes M."/>
            <person name="Du Z."/>
            <person name="Fulton L."/>
            <person name="Goela D."/>
            <person name="Graves T."/>
            <person name="Hawkins J."/>
            <person name="Hinds K."/>
            <person name="Kemp K."/>
            <person name="Latreille P."/>
            <person name="Layman D."/>
            <person name="Ozersky P."/>
            <person name="Rohlfing T."/>
            <person name="Scheet P."/>
            <person name="Walker C."/>
            <person name="Wamsley A."/>
            <person name="Wohldmann P."/>
            <person name="Pepin K."/>
            <person name="Nelson J."/>
            <person name="Korf I."/>
            <person name="Bedell J.A."/>
            <person name="Hillier L.W."/>
            <person name="Mardis E."/>
            <person name="Waterston R."/>
            <person name="Wilson R."/>
            <person name="Emanuel B.S."/>
            <person name="Shaikh T."/>
            <person name="Kurahashi H."/>
            <person name="Saitta S."/>
            <person name="Budarf M.L."/>
            <person name="McDermid H.E."/>
            <person name="Johnson A."/>
            <person name="Wong A.C.C."/>
            <person name="Morrow B.E."/>
            <person name="Edelmann L."/>
            <person name="Kim U.J."/>
            <person name="Shizuya H."/>
            <person name="Simon M.I."/>
            <person name="Dumanski J.P."/>
            <person name="Peyrard M."/>
            <person name="Kedra D."/>
            <person name="Seroussi E."/>
            <person name="Fransson I."/>
            <person name="Tapia I."/>
            <person name="Bruder C.E."/>
            <person name="O'Brien K.P."/>
            <person name="Wilkinson P."/>
            <person name="Bodenteich A."/>
            <person name="Hartman K."/>
            <person name="Hu X."/>
            <person name="Khan A.S."/>
            <person name="Lane L."/>
            <person name="Tilahun Y."/>
            <person name="Wright H."/>
        </authorList>
    </citation>
    <scope>NUCLEOTIDE SEQUENCE [LARGE SCALE GENOMIC DNA]</scope>
</reference>
<reference key="9">
    <citation type="journal article" date="2004" name="Genome Res.">
        <title>The status, quality, and expansion of the NIH full-length cDNA project: the Mammalian Gene Collection (MGC).</title>
        <authorList>
            <consortium name="The MGC Project Team"/>
        </authorList>
    </citation>
    <scope>NUCLEOTIDE SEQUENCE [LARGE SCALE MRNA] (ISOFORMS 3 AND 10)</scope>
    <source>
        <tissue>Adrenal gland</tissue>
        <tissue>Uterus</tissue>
    </source>
</reference>
<reference key="10">
    <citation type="submission" date="2006-11" db="EMBL/GenBank/DDBJ databases">
        <title>XRbm9, a new XGld2-interacting protein, enhances translation in Xenopus oocytes.</title>
        <authorList>
            <person name="Papin C."/>
        </authorList>
    </citation>
    <scope>NUCLEOTIDE SEQUENCE [MRNA] OF 3-390 (ISOFORM 7)</scope>
</reference>
<reference key="11">
    <citation type="journal article" date="2011" name="BMC Syst. Biol.">
        <title>Initial characterization of the human central proteome.</title>
        <authorList>
            <person name="Burkard T.R."/>
            <person name="Planyavsky M."/>
            <person name="Kaupe I."/>
            <person name="Breitwieser F.P."/>
            <person name="Buerckstuemmer T."/>
            <person name="Bennett K.L."/>
            <person name="Superti-Furga G."/>
            <person name="Colinge J."/>
        </authorList>
    </citation>
    <scope>IDENTIFICATION BY MASS SPECTROMETRY [LARGE SCALE ANALYSIS]</scope>
</reference>
<reference key="12">
    <citation type="journal article" date="2014" name="J. Proteomics">
        <title>An enzyme assisted RP-RPLC approach for in-depth analysis of human liver phosphoproteome.</title>
        <authorList>
            <person name="Bian Y."/>
            <person name="Song C."/>
            <person name="Cheng K."/>
            <person name="Dong M."/>
            <person name="Wang F."/>
            <person name="Huang J."/>
            <person name="Sun D."/>
            <person name="Wang L."/>
            <person name="Ye M."/>
            <person name="Zou H."/>
        </authorList>
    </citation>
    <scope>PHOSPHORYLATION [LARGE SCALE ANALYSIS] AT THR-67 (ISOFORMS 6 AND 8)</scope>
    <scope>IDENTIFICATION BY MASS SPECTROMETRY [LARGE SCALE ANALYSIS]</scope>
    <source>
        <tissue>Liver</tissue>
    </source>
</reference>
<reference key="13">
    <citation type="journal article" date="2014" name="Mol. Cell. Proteomics">
        <title>Immunoaffinity enrichment and mass spectrometry analysis of protein methylation.</title>
        <authorList>
            <person name="Guo A."/>
            <person name="Gu H."/>
            <person name="Zhou J."/>
            <person name="Mulhern D."/>
            <person name="Wang Y."/>
            <person name="Lee K.A."/>
            <person name="Yang V."/>
            <person name="Aguiar M."/>
            <person name="Kornhauser J."/>
            <person name="Jia X."/>
            <person name="Ren J."/>
            <person name="Beausoleil S.A."/>
            <person name="Silva J.C."/>
            <person name="Vemulapalli V."/>
            <person name="Bedford M.T."/>
            <person name="Comb M.J."/>
        </authorList>
    </citation>
    <scope>METHYLATION [LARGE SCALE ANALYSIS] AT ARG-329</scope>
    <scope>METHYLATION [LARGE SCALE ANALYSIS] AT ARG-249 (ISOFORM 3)</scope>
    <scope>METHYLATION [LARGE SCALE ANALYSIS] AT ARG-267 (ISOFORM 5)</scope>
    <scope>METHYLATION [LARGE SCALE ANALYSIS] AT ARG-277 (ISOFORM 7)</scope>
    <scope>METHYLATION [LARGE SCALE ANALYSIS] AT ARG-268 (ISOFORM 9)</scope>
    <scope>IDENTIFICATION BY MASS SPECTROMETRY [LARGE SCALE ANALYSIS]</scope>
    <source>
        <tissue>Colon carcinoma</tissue>
    </source>
</reference>
<reference key="14">
    <citation type="journal article" date="2023" name="Nucleic Acids Res.">
        <title>Cell-type specific regulator RBPMS switches alternative splicing via higher-order oligomerization and heterotypic interactions with other splicing regulators.</title>
        <authorList>
            <person name="Yang Y."/>
            <person name="Lee G.C."/>
            <person name="Nakagaki-Silva E."/>
            <person name="Huang Y."/>
            <person name="Peacey M."/>
            <person name="Partridge R."/>
            <person name="Gooding C."/>
            <person name="Smith C.W.J."/>
        </authorList>
    </citation>
    <scope>FUNCTION</scope>
    <scope>INTERACTION WITH RBPMS</scope>
</reference>
<reference key="15">
    <citation type="submission" date="2005-11" db="PDB data bank">
        <title>Solution structure of RNA binding domain in RNA binding motif protein 9.</title>
        <authorList>
            <consortium name="RIKEN structural genomics initiative (RSGI)"/>
        </authorList>
    </citation>
    <scope>STRUCTURE BY NMR OF 113-202</scope>
</reference>
<feature type="chain" id="PRO_0000081766" description="RNA binding protein fox-1 homolog 2">
    <location>
        <begin position="1"/>
        <end position="390"/>
    </location>
</feature>
<feature type="domain" description="RRM" evidence="3">
    <location>
        <begin position="121"/>
        <end position="197"/>
    </location>
</feature>
<feature type="region of interest" description="Disordered" evidence="4">
    <location>
        <begin position="1"/>
        <end position="127"/>
    </location>
</feature>
<feature type="compositionally biased region" description="Polar residues" evidence="4">
    <location>
        <begin position="18"/>
        <end position="28"/>
    </location>
</feature>
<feature type="compositionally biased region" description="Polar residues" evidence="4">
    <location>
        <begin position="65"/>
        <end position="95"/>
    </location>
</feature>
<feature type="compositionally biased region" description="Low complexity" evidence="4">
    <location>
        <begin position="97"/>
        <end position="117"/>
    </location>
</feature>
<feature type="site" description="Interaction with RNA" evidence="1">
    <location>
        <position position="122"/>
    </location>
</feature>
<feature type="site" description="Interaction with RNA" evidence="1">
    <location>
        <position position="130"/>
    </location>
</feature>
<feature type="site" description="Interaction with RNA" evidence="1">
    <location>
        <position position="131"/>
    </location>
</feature>
<feature type="site" description="Interaction with RNA" evidence="1">
    <location>
        <position position="155"/>
    </location>
</feature>
<feature type="site" description="Interaction with RNA" evidence="1">
    <location>
        <position position="160"/>
    </location>
</feature>
<feature type="site" description="Interaction with RNA" evidence="1">
    <location>
        <position position="164"/>
    </location>
</feature>
<feature type="site" description="Interaction with RNA" evidence="1">
    <location>
        <position position="188"/>
    </location>
</feature>
<feature type="site" description="Interaction with RNA" evidence="1">
    <location>
        <position position="198"/>
    </location>
</feature>
<feature type="modified residue" description="Omega-N-methylarginine" evidence="2">
    <location>
        <position position="281"/>
    </location>
</feature>
<feature type="modified residue" description="Asymmetric dimethylarginine" evidence="2">
    <location>
        <position position="297"/>
    </location>
</feature>
<feature type="modified residue" description="Asymmetric dimethylarginine" evidence="16">
    <location>
        <position position="329"/>
    </location>
</feature>
<feature type="modified residue" description="Asymmetric dimethylarginine; alternate" evidence="2">
    <location>
        <position position="381"/>
    </location>
</feature>
<feature type="modified residue" description="Omega-N-methylarginine; alternate" evidence="2">
    <location>
        <position position="381"/>
    </location>
</feature>
<feature type="modified residue" description="Asymmetric dimethylarginine; alternate" evidence="2">
    <location>
        <position position="386"/>
    </location>
</feature>
<feature type="modified residue" description="Omega-N-methylarginine; alternate" evidence="2">
    <location>
        <position position="386"/>
    </location>
</feature>
<feature type="splice variant" id="VSP_007180" description="In isoform 2, isoform 3, isoform 4, isoform 5, isoform 9 and isoform 10." evidence="7 8 9 10 12 13">
    <original>MQNEPLTPGYHGFPARDS</original>
    <variation>MEKKKMVT</variation>
    <location>
        <begin position="1"/>
        <end position="18"/>
    </location>
</feature>
<feature type="splice variant" id="VSP_030889" description="In isoform 6 and isoform 8." evidence="8 14">
    <original>M</original>
    <variation>MAEGAQPHQPPQLGPGAAARGMKRESELELPVPGAGGDGADPGLSKRPRTEEAAADGGGGM</variation>
    <location>
        <position position="1"/>
    </location>
</feature>
<feature type="splice variant" id="VSP_030890" description="In isoform 2, isoform 8 and isoform 9." evidence="7 8 14">
    <original>T</original>
    <variation>TQ</variation>
    <location>
        <position position="94"/>
    </location>
</feature>
<feature type="splice variant" id="VSP_007181" description="In isoform 3." evidence="10">
    <location>
        <begin position="143"/>
        <end position="160"/>
    </location>
</feature>
<feature type="splice variant" id="VSP_007182" description="In isoform 3, isoform 5, isoform 7 and isoform 9." evidence="7 9 10 11">
    <original>SLPLV</original>
    <variation>I</variation>
    <location>
        <begin position="261"/>
        <end position="265"/>
    </location>
</feature>
<feature type="splice variant" id="VSP_007183" description="In isoform 4 and isoform 9." evidence="7 13">
    <original>VYQDGFYGADLYGGYAAYRYAQPATATAATAAAAAAAAYSDGYGRVYTADPYHALAPAASYGVGAVASLYRGGYSRFAPY</original>
    <variation>DMQPTDMHSLLLQPQPPLLQPLQPLTVTVMAGCTQPTPTMPLPLPLAMELALWRVYTEVATADLPPTEVT</variation>
    <location>
        <begin position="311"/>
        <end position="390"/>
    </location>
</feature>
<feature type="splice variant" id="VSP_030891" description="In isoform 7." evidence="11">
    <original>GGYAAYRYAQPATATAATAAAAAAAAYSDGYGRVYTADPYHALAPAASYGVGAVASLYRGGYSRFAPY</original>
    <variation>IESANCFRSNRVDMQPTDMHSLLLQPQPPLLQPLQPLTVTVMAGCTQPTPTMPLPLPLAMELALWRVYTEVATADLPPTEVT</variation>
    <location>
        <begin position="323"/>
        <end position="390"/>
    </location>
</feature>
<feature type="sequence conflict" description="In Ref. 6; AAX84843." evidence="15" ref="6">
    <original>S</original>
    <variation>G</variation>
    <location>
        <position position="116"/>
    </location>
</feature>
<feature type="sequence conflict" description="In Ref. 4; BAB70875." evidence="15" ref="4">
    <original>S</original>
    <variation>F</variation>
    <location>
        <position position="231"/>
    </location>
</feature>
<feature type="sequence conflict" description="In Ref. 9; AAH13115." evidence="15" ref="9">
    <original>A</original>
    <variation>V</variation>
    <location>
        <position position="346"/>
    </location>
</feature>
<feature type="sequence conflict" description="In Ref. 4; BAB70875." evidence="15" ref="4">
    <original>S</original>
    <variation>G</variation>
    <location>
        <position position="350"/>
    </location>
</feature>
<feature type="strand" evidence="18">
    <location>
        <begin position="122"/>
        <end position="127"/>
    </location>
</feature>
<feature type="helix" evidence="18">
    <location>
        <begin position="134"/>
        <end position="140"/>
    </location>
</feature>
<feature type="helix" evidence="18">
    <location>
        <begin position="141"/>
        <end position="143"/>
    </location>
</feature>
<feature type="strand" evidence="18">
    <location>
        <begin position="147"/>
        <end position="153"/>
    </location>
</feature>
<feature type="turn" evidence="18">
    <location>
        <begin position="156"/>
        <end position="159"/>
    </location>
</feature>
<feature type="strand" evidence="18">
    <location>
        <begin position="162"/>
        <end position="168"/>
    </location>
</feature>
<feature type="helix" evidence="18">
    <location>
        <begin position="170"/>
        <end position="180"/>
    </location>
</feature>
<feature type="strand" evidence="18">
    <location>
        <begin position="191"/>
        <end position="194"/>
    </location>
</feature>
<feature type="modified residue" description="Omega-N-methylarginine" evidence="16">
    <location sequence="O43251-3">
        <position position="249"/>
    </location>
</feature>
<feature type="modified residue" description="Omega-N-methylarginine" evidence="16">
    <location sequence="O43251-5">
        <position position="267"/>
    </location>
</feature>
<feature type="modified residue" description="Phosphothreonine" evidence="17">
    <location sequence="O43251-6">
        <position position="67"/>
    </location>
</feature>
<feature type="sequence conflict" description="In Ref. 4; BAB70875." evidence="15" ref="4">
    <original>H</original>
    <variation>Q</variation>
    <location sequence="O43251-6">
        <position position="8"/>
    </location>
</feature>
<feature type="modified residue" description="Omega-N-methylarginine" evidence="16">
    <location sequence="O43251-7">
        <position position="277"/>
    </location>
</feature>
<feature type="modified residue" description="Phosphothreonine" evidence="17">
    <location sequence="O43251-8">
        <position position="67"/>
    </location>
</feature>
<feature type="modified residue" description="Omega-N-methylarginine" evidence="16">
    <location sequence="O43251-9">
        <position position="268"/>
    </location>
</feature>
<accession>O43251</accession>
<accession>A4F5G8</accession>
<accession>A8K5Z5</accession>
<accession>B0QYY8</accession>
<accession>B0QYY9</accession>
<accession>Q0PRL5</accession>
<accession>Q0VH35</accession>
<accession>Q5TF71</accession>
<accession>Q6IC09</accession>
<accession>Q8TD00</accession>
<accession>Q8WYB1</accession>
<accession>Q96DZ6</accession>
<accession>Q96NL7</accession>
<accession>Q9UGW4</accession>
<accession>Q9UH33</accession>
<proteinExistence type="evidence at protein level"/>
<organism>
    <name type="scientific">Homo sapiens</name>
    <name type="common">Human</name>
    <dbReference type="NCBI Taxonomy" id="9606"/>
    <lineage>
        <taxon>Eukaryota</taxon>
        <taxon>Metazoa</taxon>
        <taxon>Chordata</taxon>
        <taxon>Craniata</taxon>
        <taxon>Vertebrata</taxon>
        <taxon>Euteleostomi</taxon>
        <taxon>Mammalia</taxon>
        <taxon>Eutheria</taxon>
        <taxon>Euarchontoglires</taxon>
        <taxon>Primates</taxon>
        <taxon>Haplorrhini</taxon>
        <taxon>Catarrhini</taxon>
        <taxon>Hominidae</taxon>
        <taxon>Homo</taxon>
    </lineage>
</organism>
<dbReference type="EMBL" id="AY072786">
    <property type="protein sequence ID" value="AAL67150.1"/>
    <property type="molecule type" value="mRNA"/>
</dbReference>
<dbReference type="EMBL" id="AF229058">
    <property type="protein sequence ID" value="AAL71905.1"/>
    <property type="molecule type" value="mRNA"/>
</dbReference>
<dbReference type="EMBL" id="AY960684">
    <property type="protein sequence ID" value="AAX84843.1"/>
    <property type="molecule type" value="mRNA"/>
</dbReference>
<dbReference type="EMBL" id="AL009266">
    <property type="protein sequence ID" value="CAA15842.1"/>
    <property type="molecule type" value="mRNA"/>
</dbReference>
<dbReference type="EMBL" id="CR456559">
    <property type="protein sequence ID" value="CAG30445.1"/>
    <property type="molecule type" value="mRNA"/>
</dbReference>
<dbReference type="EMBL" id="AK055213">
    <property type="protein sequence ID" value="BAB70875.1"/>
    <property type="molecule type" value="mRNA"/>
</dbReference>
<dbReference type="EMBL" id="AK291460">
    <property type="protein sequence ID" value="BAF84149.1"/>
    <property type="molecule type" value="mRNA"/>
</dbReference>
<dbReference type="EMBL" id="DQ778625">
    <property type="protein sequence ID" value="ABG77459.1"/>
    <property type="molecule type" value="mRNA"/>
</dbReference>
<dbReference type="EMBL" id="AL049748">
    <property type="status" value="NOT_ANNOTATED_CDS"/>
    <property type="molecule type" value="Genomic_DNA"/>
</dbReference>
<dbReference type="EMBL" id="AL079295">
    <property type="status" value="NOT_ANNOTATED_CDS"/>
    <property type="molecule type" value="Genomic_DNA"/>
</dbReference>
<dbReference type="EMBL" id="BC013115">
    <property type="protein sequence ID" value="AAH13115.1"/>
    <property type="molecule type" value="mRNA"/>
</dbReference>
<dbReference type="EMBL" id="BC025281">
    <property type="protein sequence ID" value="AAH25281.1"/>
    <property type="molecule type" value="mRNA"/>
</dbReference>
<dbReference type="EMBL" id="AM419009">
    <property type="protein sequence ID" value="CAL91352.1"/>
    <property type="molecule type" value="mRNA"/>
</dbReference>
<dbReference type="CCDS" id="CCDS13921.1">
    <molecule id="O43251-9"/>
</dbReference>
<dbReference type="CCDS" id="CCDS43013.1">
    <molecule id="O43251-8"/>
</dbReference>
<dbReference type="CCDS" id="CCDS46699.1">
    <molecule id="O43251-4"/>
</dbReference>
<dbReference type="CCDS" id="CCDS46700.1">
    <molecule id="O43251-10"/>
</dbReference>
<dbReference type="CCDS" id="CCDS46701.1">
    <molecule id="O43251-5"/>
</dbReference>
<dbReference type="RefSeq" id="NP_001026865.1">
    <molecule id="O43251-10"/>
    <property type="nucleotide sequence ID" value="NM_001031695.4"/>
</dbReference>
<dbReference type="RefSeq" id="NP_001076045.1">
    <molecule id="O43251-5"/>
    <property type="nucleotide sequence ID" value="NM_001082576.3"/>
</dbReference>
<dbReference type="RefSeq" id="NP_001076046.1">
    <molecule id="O43251-4"/>
    <property type="nucleotide sequence ID" value="NM_001082577.3"/>
</dbReference>
<dbReference type="RefSeq" id="NP_001076047.2">
    <molecule id="O43251-8"/>
    <property type="nucleotide sequence ID" value="NM_001082578.4"/>
</dbReference>
<dbReference type="RefSeq" id="NP_001076048.2">
    <molecule id="O43251-6"/>
    <property type="nucleotide sequence ID" value="NM_001082579.3"/>
</dbReference>
<dbReference type="RefSeq" id="NP_001336926.1">
    <molecule id="O43251-2"/>
    <property type="nucleotide sequence ID" value="NM_001349997.2"/>
</dbReference>
<dbReference type="RefSeq" id="NP_055124.1">
    <molecule id="O43251-9"/>
    <property type="nucleotide sequence ID" value="NM_014309.4"/>
</dbReference>
<dbReference type="RefSeq" id="XP_005261494.1">
    <property type="nucleotide sequence ID" value="XM_005261437.1"/>
</dbReference>
<dbReference type="PDB" id="2CQ3">
    <property type="method" value="NMR"/>
    <property type="chains" value="A=113-202"/>
</dbReference>
<dbReference type="PDBsum" id="2CQ3"/>
<dbReference type="SMR" id="O43251"/>
<dbReference type="BioGRID" id="117087">
    <property type="interactions" value="303"/>
</dbReference>
<dbReference type="FunCoup" id="O43251">
    <property type="interactions" value="2687"/>
</dbReference>
<dbReference type="IntAct" id="O43251">
    <property type="interactions" value="140"/>
</dbReference>
<dbReference type="MINT" id="O43251"/>
<dbReference type="STRING" id="9606.ENSP00000413035"/>
<dbReference type="GlyGen" id="O43251">
    <property type="glycosylation" value="1 site, 1 O-linked glycan (1 site)"/>
</dbReference>
<dbReference type="iPTMnet" id="O43251"/>
<dbReference type="PhosphoSitePlus" id="O43251"/>
<dbReference type="BioMuta" id="RBFOX2"/>
<dbReference type="jPOST" id="O43251"/>
<dbReference type="MassIVE" id="O43251"/>
<dbReference type="PaxDb" id="9606-ENSP00000413035"/>
<dbReference type="PeptideAtlas" id="O43251"/>
<dbReference type="ProteomicsDB" id="48827">
    <molecule id="O43251-1"/>
</dbReference>
<dbReference type="ProteomicsDB" id="48828">
    <molecule id="O43251-10"/>
</dbReference>
<dbReference type="ProteomicsDB" id="48829">
    <molecule id="O43251-2"/>
</dbReference>
<dbReference type="ProteomicsDB" id="48830">
    <molecule id="O43251-3"/>
</dbReference>
<dbReference type="ProteomicsDB" id="48831">
    <molecule id="O43251-4"/>
</dbReference>
<dbReference type="ProteomicsDB" id="48832">
    <molecule id="O43251-5"/>
</dbReference>
<dbReference type="ProteomicsDB" id="48833">
    <molecule id="O43251-6"/>
</dbReference>
<dbReference type="ProteomicsDB" id="48834">
    <molecule id="O43251-7"/>
</dbReference>
<dbReference type="ProteomicsDB" id="48835">
    <molecule id="O43251-8"/>
</dbReference>
<dbReference type="ProteomicsDB" id="48836">
    <molecule id="O43251-9"/>
</dbReference>
<dbReference type="Pumba" id="O43251"/>
<dbReference type="Antibodypedia" id="331">
    <property type="antibodies" value="261 antibodies from 29 providers"/>
</dbReference>
<dbReference type="DNASU" id="23543"/>
<dbReference type="Ensembl" id="ENST00000262829.11">
    <molecule id="O43251-3"/>
    <property type="protein sequence ID" value="ENSP00000262829.7"/>
    <property type="gene ID" value="ENSG00000100320.24"/>
</dbReference>
<dbReference type="Ensembl" id="ENST00000405409.6">
    <molecule id="O43251-9"/>
    <property type="protein sequence ID" value="ENSP00000384944.2"/>
    <property type="gene ID" value="ENSG00000100320.24"/>
</dbReference>
<dbReference type="Ensembl" id="ENST00000414461.6">
    <molecule id="O43251-4"/>
    <property type="protein sequence ID" value="ENSP00000407855.2"/>
    <property type="gene ID" value="ENSG00000100320.24"/>
</dbReference>
<dbReference type="Ensembl" id="ENST00000416721.6">
    <molecule id="O43251-5"/>
    <property type="protein sequence ID" value="ENSP00000405651.2"/>
    <property type="gene ID" value="ENSG00000100320.24"/>
</dbReference>
<dbReference type="Ensembl" id="ENST00000438146.7">
    <molecule id="O43251-8"/>
    <property type="protein sequence ID" value="ENSP00000413035.2"/>
    <property type="gene ID" value="ENSG00000100320.24"/>
</dbReference>
<dbReference type="Ensembl" id="ENST00000449924.6">
    <molecule id="O43251-10"/>
    <property type="protein sequence ID" value="ENSP00000391670.2"/>
    <property type="gene ID" value="ENSG00000100320.24"/>
</dbReference>
<dbReference type="Ensembl" id="ENST00000618140.3">
    <molecule id="O43251-9"/>
    <property type="protein sequence ID" value="ENSP00000482053.2"/>
    <property type="gene ID" value="ENSG00000277564.4"/>
</dbReference>
<dbReference type="Ensembl" id="ENST00000619768.4">
    <molecule id="O43251-10"/>
    <property type="protein sequence ID" value="ENSP00000479761.1"/>
    <property type="gene ID" value="ENSG00000277564.4"/>
</dbReference>
<dbReference type="Ensembl" id="ENST00000626107.2">
    <molecule id="O43251-4"/>
    <property type="protein sequence ID" value="ENSP00000485984.1"/>
    <property type="gene ID" value="ENSG00000277564.4"/>
</dbReference>
<dbReference type="Ensembl" id="ENST00000627946.2">
    <molecule id="O43251-5"/>
    <property type="protein sequence ID" value="ENSP00000487477.1"/>
    <property type="gene ID" value="ENSG00000277564.4"/>
</dbReference>
<dbReference type="Ensembl" id="ENST00000631365.2">
    <molecule id="O43251-3"/>
    <property type="protein sequence ID" value="ENSP00000485711.1"/>
    <property type="gene ID" value="ENSG00000277564.4"/>
</dbReference>
<dbReference type="GeneID" id="23543"/>
<dbReference type="KEGG" id="hsa:23543"/>
<dbReference type="UCSC" id="uc003aoh.5">
    <molecule id="O43251-1"/>
    <property type="organism name" value="human"/>
</dbReference>
<dbReference type="AGR" id="HGNC:9906"/>
<dbReference type="CTD" id="23543"/>
<dbReference type="DisGeNET" id="23543"/>
<dbReference type="GeneCards" id="RBFOX2"/>
<dbReference type="HGNC" id="HGNC:9906">
    <property type="gene designation" value="RBFOX2"/>
</dbReference>
<dbReference type="HPA" id="ENSG00000100320">
    <property type="expression patterns" value="Low tissue specificity"/>
</dbReference>
<dbReference type="MalaCards" id="RBFOX2"/>
<dbReference type="MIM" id="612149">
    <property type="type" value="gene"/>
</dbReference>
<dbReference type="neXtProt" id="NX_O43251"/>
<dbReference type="OpenTargets" id="ENSG00000100320"/>
<dbReference type="PharmGKB" id="PA34272"/>
<dbReference type="VEuPathDB" id="HostDB:ENSG00000100320"/>
<dbReference type="eggNOG" id="KOG0125">
    <property type="taxonomic scope" value="Eukaryota"/>
</dbReference>
<dbReference type="GeneTree" id="ENSGT00940000157534"/>
<dbReference type="InParanoid" id="O43251"/>
<dbReference type="OMA" id="HDENTTH"/>
<dbReference type="OrthoDB" id="5382468at2759"/>
<dbReference type="PAN-GO" id="O43251">
    <property type="GO annotations" value="5 GO annotations based on evolutionary models"/>
</dbReference>
<dbReference type="PhylomeDB" id="O43251"/>
<dbReference type="TreeFam" id="TF315942"/>
<dbReference type="PathwayCommons" id="O43251"/>
<dbReference type="Reactome" id="R-HSA-6803529">
    <property type="pathway name" value="FGFR2 alternative splicing"/>
</dbReference>
<dbReference type="SignaLink" id="O43251"/>
<dbReference type="SIGNOR" id="O43251"/>
<dbReference type="BioGRID-ORCS" id="23543">
    <property type="hits" value="31 hits in 1162 CRISPR screens"/>
</dbReference>
<dbReference type="CD-CODE" id="DEE660B4">
    <property type="entry name" value="Stress granule"/>
</dbReference>
<dbReference type="ChiTaRS" id="RBFOX2">
    <property type="organism name" value="human"/>
</dbReference>
<dbReference type="EvolutionaryTrace" id="O43251"/>
<dbReference type="GeneWiki" id="RBM9"/>
<dbReference type="GenomeRNAi" id="23543"/>
<dbReference type="Pharos" id="O43251">
    <property type="development level" value="Tbio"/>
</dbReference>
<dbReference type="PRO" id="PR:O43251"/>
<dbReference type="Proteomes" id="UP000005640">
    <property type="component" value="Chromosome 22"/>
</dbReference>
<dbReference type="RNAct" id="O43251">
    <property type="molecule type" value="protein"/>
</dbReference>
<dbReference type="Bgee" id="ENSG00000100320">
    <property type="expression patterns" value="Expressed in cortical plate and 104 other cell types or tissues"/>
</dbReference>
<dbReference type="ExpressionAtlas" id="O43251">
    <property type="expression patterns" value="baseline and differential"/>
</dbReference>
<dbReference type="GO" id="GO:0005737">
    <property type="term" value="C:cytoplasm"/>
    <property type="evidence" value="ECO:0000318"/>
    <property type="project" value="GO_Central"/>
</dbReference>
<dbReference type="GO" id="GO:0005654">
    <property type="term" value="C:nucleoplasm"/>
    <property type="evidence" value="ECO:0000314"/>
    <property type="project" value="HPA"/>
</dbReference>
<dbReference type="GO" id="GO:0005634">
    <property type="term" value="C:nucleus"/>
    <property type="evidence" value="ECO:0000314"/>
    <property type="project" value="UniProtKB"/>
</dbReference>
<dbReference type="GO" id="GO:0140297">
    <property type="term" value="F:DNA-binding transcription factor binding"/>
    <property type="evidence" value="ECO:0000314"/>
    <property type="project" value="UniProtKB"/>
</dbReference>
<dbReference type="GO" id="GO:0003729">
    <property type="term" value="F:mRNA binding"/>
    <property type="evidence" value="ECO:0000318"/>
    <property type="project" value="GO_Central"/>
</dbReference>
<dbReference type="GO" id="GO:0003723">
    <property type="term" value="F:RNA binding"/>
    <property type="evidence" value="ECO:0000314"/>
    <property type="project" value="UniProtKB"/>
</dbReference>
<dbReference type="GO" id="GO:0003714">
    <property type="term" value="F:transcription corepressor activity"/>
    <property type="evidence" value="ECO:0000314"/>
    <property type="project" value="UniProtKB"/>
</dbReference>
<dbReference type="GO" id="GO:0030520">
    <property type="term" value="P:estrogen receptor signaling pathway"/>
    <property type="evidence" value="ECO:0000314"/>
    <property type="project" value="UniProtKB"/>
</dbReference>
<dbReference type="GO" id="GO:0006397">
    <property type="term" value="P:mRNA processing"/>
    <property type="evidence" value="ECO:0007669"/>
    <property type="project" value="UniProtKB-KW"/>
</dbReference>
<dbReference type="GO" id="GO:0045892">
    <property type="term" value="P:negative regulation of DNA-templated transcription"/>
    <property type="evidence" value="ECO:0000314"/>
    <property type="project" value="UniProtKB"/>
</dbReference>
<dbReference type="GO" id="GO:0007399">
    <property type="term" value="P:nervous system development"/>
    <property type="evidence" value="ECO:0000318"/>
    <property type="project" value="GO_Central"/>
</dbReference>
<dbReference type="GO" id="GO:0000381">
    <property type="term" value="P:regulation of alternative mRNA splicing, via spliceosome"/>
    <property type="evidence" value="ECO:0000250"/>
    <property type="project" value="UniProtKB"/>
</dbReference>
<dbReference type="GO" id="GO:0042127">
    <property type="term" value="P:regulation of cell population proliferation"/>
    <property type="evidence" value="ECO:0000304"/>
    <property type="project" value="UniProtKB"/>
</dbReference>
<dbReference type="GO" id="GO:0016070">
    <property type="term" value="P:RNA metabolic process"/>
    <property type="evidence" value="ECO:0000304"/>
    <property type="project" value="UniProtKB"/>
</dbReference>
<dbReference type="GO" id="GO:0008380">
    <property type="term" value="P:RNA splicing"/>
    <property type="evidence" value="ECO:0007669"/>
    <property type="project" value="UniProtKB-KW"/>
</dbReference>
<dbReference type="CDD" id="cd12407">
    <property type="entry name" value="RRM_FOX1_like"/>
    <property type="match status" value="1"/>
</dbReference>
<dbReference type="FunFam" id="3.30.70.330:FF:000375">
    <property type="entry name" value="RNA binding fox-1 homolog 1"/>
    <property type="match status" value="1"/>
</dbReference>
<dbReference type="Gene3D" id="3.30.70.330">
    <property type="match status" value="1"/>
</dbReference>
<dbReference type="InterPro" id="IPR025670">
    <property type="entry name" value="Fox-1_C_dom"/>
</dbReference>
<dbReference type="InterPro" id="IPR034237">
    <property type="entry name" value="FOX1_RRM"/>
</dbReference>
<dbReference type="InterPro" id="IPR012677">
    <property type="entry name" value="Nucleotide-bd_a/b_plait_sf"/>
</dbReference>
<dbReference type="InterPro" id="IPR035979">
    <property type="entry name" value="RBD_domain_sf"/>
</dbReference>
<dbReference type="InterPro" id="IPR017325">
    <property type="entry name" value="RBFOX1-3"/>
</dbReference>
<dbReference type="InterPro" id="IPR047131">
    <property type="entry name" value="RBFOX1-like"/>
</dbReference>
<dbReference type="InterPro" id="IPR000504">
    <property type="entry name" value="RRM_dom"/>
</dbReference>
<dbReference type="PANTHER" id="PTHR15597">
    <property type="entry name" value="ATAXIN 2-BINDING PROTEIN 1-RELATED"/>
    <property type="match status" value="1"/>
</dbReference>
<dbReference type="PANTHER" id="PTHR15597:SF31">
    <property type="entry name" value="RNA BINDING PROTEIN FOX-1 HOMOLOG 2"/>
    <property type="match status" value="1"/>
</dbReference>
<dbReference type="Pfam" id="PF12414">
    <property type="entry name" value="Fox-1_C"/>
    <property type="match status" value="1"/>
</dbReference>
<dbReference type="Pfam" id="PF00076">
    <property type="entry name" value="RRM_1"/>
    <property type="match status" value="1"/>
</dbReference>
<dbReference type="PIRSF" id="PIRSF037932">
    <property type="entry name" value="Ataxin_2_bd_A2BP"/>
    <property type="match status" value="1"/>
</dbReference>
<dbReference type="SMART" id="SM00360">
    <property type="entry name" value="RRM"/>
    <property type="match status" value="1"/>
</dbReference>
<dbReference type="SUPFAM" id="SSF54928">
    <property type="entry name" value="RNA-binding domain, RBD"/>
    <property type="match status" value="1"/>
</dbReference>
<dbReference type="PROSITE" id="PS50102">
    <property type="entry name" value="RRM"/>
    <property type="match status" value="1"/>
</dbReference>